<dbReference type="EC" id="2.6.1.52" evidence="2"/>
<dbReference type="EMBL" id="AE014075">
    <property type="protein sequence ID" value="AAN79515.1"/>
    <property type="molecule type" value="Genomic_DNA"/>
</dbReference>
<dbReference type="RefSeq" id="WP_000057158.1">
    <property type="nucleotide sequence ID" value="NZ_CP051263.1"/>
</dbReference>
<dbReference type="SMR" id="Q8FJB7"/>
<dbReference type="STRING" id="199310.c1045"/>
<dbReference type="KEGG" id="ecc:c1045"/>
<dbReference type="eggNOG" id="COG1932">
    <property type="taxonomic scope" value="Bacteria"/>
</dbReference>
<dbReference type="HOGENOM" id="CLU_034866_0_2_6"/>
<dbReference type="BioCyc" id="ECOL199310:C1045-MONOMER"/>
<dbReference type="UniPathway" id="UPA00135">
    <property type="reaction ID" value="UER00197"/>
</dbReference>
<dbReference type="UniPathway" id="UPA00244">
    <property type="reaction ID" value="UER00311"/>
</dbReference>
<dbReference type="Proteomes" id="UP000001410">
    <property type="component" value="Chromosome"/>
</dbReference>
<dbReference type="GO" id="GO:0005737">
    <property type="term" value="C:cytoplasm"/>
    <property type="evidence" value="ECO:0007669"/>
    <property type="project" value="UniProtKB-SubCell"/>
</dbReference>
<dbReference type="GO" id="GO:0004648">
    <property type="term" value="F:O-phospho-L-serine:2-oxoglutarate aminotransferase activity"/>
    <property type="evidence" value="ECO:0007669"/>
    <property type="project" value="UniProtKB-UniRule"/>
</dbReference>
<dbReference type="GO" id="GO:0030170">
    <property type="term" value="F:pyridoxal phosphate binding"/>
    <property type="evidence" value="ECO:0007669"/>
    <property type="project" value="UniProtKB-UniRule"/>
</dbReference>
<dbReference type="GO" id="GO:0006564">
    <property type="term" value="P:L-serine biosynthetic process"/>
    <property type="evidence" value="ECO:0007669"/>
    <property type="project" value="UniProtKB-UniRule"/>
</dbReference>
<dbReference type="GO" id="GO:0008615">
    <property type="term" value="P:pyridoxine biosynthetic process"/>
    <property type="evidence" value="ECO:0007669"/>
    <property type="project" value="UniProtKB-UniRule"/>
</dbReference>
<dbReference type="CDD" id="cd00611">
    <property type="entry name" value="PSAT_like"/>
    <property type="match status" value="1"/>
</dbReference>
<dbReference type="FunFam" id="3.40.640.10:FF:000010">
    <property type="entry name" value="Phosphoserine aminotransferase"/>
    <property type="match status" value="1"/>
</dbReference>
<dbReference type="FunFam" id="3.90.1150.10:FF:000006">
    <property type="entry name" value="Phosphoserine aminotransferase"/>
    <property type="match status" value="1"/>
</dbReference>
<dbReference type="Gene3D" id="3.90.1150.10">
    <property type="entry name" value="Aspartate Aminotransferase, domain 1"/>
    <property type="match status" value="1"/>
</dbReference>
<dbReference type="Gene3D" id="3.40.640.10">
    <property type="entry name" value="Type I PLP-dependent aspartate aminotransferase-like (Major domain)"/>
    <property type="match status" value="1"/>
</dbReference>
<dbReference type="HAMAP" id="MF_00160">
    <property type="entry name" value="SerC_aminotrans_5"/>
    <property type="match status" value="1"/>
</dbReference>
<dbReference type="InterPro" id="IPR000192">
    <property type="entry name" value="Aminotrans_V_dom"/>
</dbReference>
<dbReference type="InterPro" id="IPR020578">
    <property type="entry name" value="Aminotrans_V_PyrdxlP_BS"/>
</dbReference>
<dbReference type="InterPro" id="IPR022278">
    <property type="entry name" value="Pser_aminoTfrase"/>
</dbReference>
<dbReference type="InterPro" id="IPR015424">
    <property type="entry name" value="PyrdxlP-dep_Trfase"/>
</dbReference>
<dbReference type="InterPro" id="IPR015421">
    <property type="entry name" value="PyrdxlP-dep_Trfase_major"/>
</dbReference>
<dbReference type="InterPro" id="IPR015422">
    <property type="entry name" value="PyrdxlP-dep_Trfase_small"/>
</dbReference>
<dbReference type="NCBIfam" id="NF003764">
    <property type="entry name" value="PRK05355.1"/>
    <property type="match status" value="1"/>
</dbReference>
<dbReference type="NCBIfam" id="TIGR01364">
    <property type="entry name" value="serC_1"/>
    <property type="match status" value="1"/>
</dbReference>
<dbReference type="PANTHER" id="PTHR43247">
    <property type="entry name" value="PHOSPHOSERINE AMINOTRANSFERASE"/>
    <property type="match status" value="1"/>
</dbReference>
<dbReference type="PANTHER" id="PTHR43247:SF1">
    <property type="entry name" value="PHOSPHOSERINE AMINOTRANSFERASE"/>
    <property type="match status" value="1"/>
</dbReference>
<dbReference type="Pfam" id="PF00266">
    <property type="entry name" value="Aminotran_5"/>
    <property type="match status" value="1"/>
</dbReference>
<dbReference type="PIRSF" id="PIRSF000525">
    <property type="entry name" value="SerC"/>
    <property type="match status" value="1"/>
</dbReference>
<dbReference type="SUPFAM" id="SSF53383">
    <property type="entry name" value="PLP-dependent transferases"/>
    <property type="match status" value="1"/>
</dbReference>
<dbReference type="PROSITE" id="PS00595">
    <property type="entry name" value="AA_TRANSFER_CLASS_5"/>
    <property type="match status" value="1"/>
</dbReference>
<protein>
    <recommendedName>
        <fullName evidence="2">Phosphoserine aminotransferase</fullName>
        <ecNumber evidence="2">2.6.1.52</ecNumber>
    </recommendedName>
    <alternativeName>
        <fullName evidence="2">Phosphohydroxythreonine aminotransferase</fullName>
        <shortName evidence="2">PSAT</shortName>
    </alternativeName>
</protein>
<organism>
    <name type="scientific">Escherichia coli O6:H1 (strain CFT073 / ATCC 700928 / UPEC)</name>
    <dbReference type="NCBI Taxonomy" id="199310"/>
    <lineage>
        <taxon>Bacteria</taxon>
        <taxon>Pseudomonadati</taxon>
        <taxon>Pseudomonadota</taxon>
        <taxon>Gammaproteobacteria</taxon>
        <taxon>Enterobacterales</taxon>
        <taxon>Enterobacteriaceae</taxon>
        <taxon>Escherichia</taxon>
    </lineage>
</organism>
<evidence type="ECO:0000250" key="1"/>
<evidence type="ECO:0000255" key="2">
    <source>
        <dbReference type="HAMAP-Rule" id="MF_00160"/>
    </source>
</evidence>
<comment type="function">
    <text evidence="2">Catalyzes the reversible conversion of 3-phosphohydroxypyruvate to phosphoserine and of 3-hydroxy-2-oxo-4-phosphonooxybutanoate to phosphohydroxythreonine.</text>
</comment>
<comment type="catalytic activity">
    <reaction evidence="2">
        <text>O-phospho-L-serine + 2-oxoglutarate = 3-phosphooxypyruvate + L-glutamate</text>
        <dbReference type="Rhea" id="RHEA:14329"/>
        <dbReference type="ChEBI" id="CHEBI:16810"/>
        <dbReference type="ChEBI" id="CHEBI:18110"/>
        <dbReference type="ChEBI" id="CHEBI:29985"/>
        <dbReference type="ChEBI" id="CHEBI:57524"/>
        <dbReference type="EC" id="2.6.1.52"/>
    </reaction>
</comment>
<comment type="catalytic activity">
    <reaction evidence="2">
        <text>4-(phosphooxy)-L-threonine + 2-oxoglutarate = (R)-3-hydroxy-2-oxo-4-phosphooxybutanoate + L-glutamate</text>
        <dbReference type="Rhea" id="RHEA:16573"/>
        <dbReference type="ChEBI" id="CHEBI:16810"/>
        <dbReference type="ChEBI" id="CHEBI:29985"/>
        <dbReference type="ChEBI" id="CHEBI:58452"/>
        <dbReference type="ChEBI" id="CHEBI:58538"/>
        <dbReference type="EC" id="2.6.1.52"/>
    </reaction>
</comment>
<comment type="cofactor">
    <cofactor evidence="2">
        <name>pyridoxal 5'-phosphate</name>
        <dbReference type="ChEBI" id="CHEBI:597326"/>
    </cofactor>
    <text evidence="2">Binds 1 pyridoxal phosphate per subunit.</text>
</comment>
<comment type="pathway">
    <text evidence="2">Amino-acid biosynthesis; L-serine biosynthesis; L-serine from 3-phospho-D-glycerate: step 2/3.</text>
</comment>
<comment type="pathway">
    <text evidence="2">Cofactor biosynthesis; pyridoxine 5'-phosphate biosynthesis; pyridoxine 5'-phosphate from D-erythrose 4-phosphate: step 3/5.</text>
</comment>
<comment type="subunit">
    <text evidence="2">Homodimer.</text>
</comment>
<comment type="subcellular location">
    <subcellularLocation>
        <location evidence="2">Cytoplasm</location>
    </subcellularLocation>
</comment>
<comment type="similarity">
    <text evidence="2">Belongs to the class-V pyridoxal-phosphate-dependent aminotransferase family. SerC subfamily.</text>
</comment>
<sequence>MAQIFNFSSGPAMLPAEVLKQAQQELRDWNGLGTSVMEVSHRGKEFIQVAEEAEKDFRDLLNVPSNYKVLFCHGGGRGQFAAVPLNILGDKTTADYVDAGYWAASAIKEAKKYCTPNVFDAKVTVDGLRAVKPMSEWQLSDNAAYMHYCPNETIDGIAIDETPDFGKDVVVAADFSSTILSRPIDVSRYGVIYAGAQKNIGPAGLTIVIVREDLLGKANIACPSILDYSILNDNDSMFNTPPTFAWYLSGLVFKWLKANGGVAAMDKINQQKAELLYGVIDNSDFYRNDVAKANRSRMNVPFQLADSALDKLFLEESFAAGLHALKGHRVVGGMRASIYNAMPLEGVKALTDFMVEFERRHG</sequence>
<feature type="initiator methionine" description="Removed" evidence="1">
    <location>
        <position position="1"/>
    </location>
</feature>
<feature type="chain" id="PRO_0000150169" description="Phosphoserine aminotransferase">
    <location>
        <begin position="2"/>
        <end position="362"/>
    </location>
</feature>
<feature type="binding site" evidence="2">
    <location>
        <position position="9"/>
    </location>
    <ligand>
        <name>L-glutamate</name>
        <dbReference type="ChEBI" id="CHEBI:29985"/>
    </ligand>
</feature>
<feature type="binding site" evidence="2">
    <location>
        <position position="42"/>
    </location>
    <ligand>
        <name>L-glutamate</name>
        <dbReference type="ChEBI" id="CHEBI:29985"/>
    </ligand>
</feature>
<feature type="binding site" evidence="2">
    <location>
        <begin position="76"/>
        <end position="77"/>
    </location>
    <ligand>
        <name>pyridoxal 5'-phosphate</name>
        <dbReference type="ChEBI" id="CHEBI:597326"/>
    </ligand>
</feature>
<feature type="binding site" evidence="2">
    <location>
        <position position="102"/>
    </location>
    <ligand>
        <name>pyridoxal 5'-phosphate</name>
        <dbReference type="ChEBI" id="CHEBI:597326"/>
    </ligand>
</feature>
<feature type="binding site" evidence="2">
    <location>
        <position position="153"/>
    </location>
    <ligand>
        <name>pyridoxal 5'-phosphate</name>
        <dbReference type="ChEBI" id="CHEBI:597326"/>
    </ligand>
</feature>
<feature type="binding site" evidence="2">
    <location>
        <position position="174"/>
    </location>
    <ligand>
        <name>pyridoxal 5'-phosphate</name>
        <dbReference type="ChEBI" id="CHEBI:597326"/>
    </ligand>
</feature>
<feature type="binding site" evidence="2">
    <location>
        <position position="197"/>
    </location>
    <ligand>
        <name>pyridoxal 5'-phosphate</name>
        <dbReference type="ChEBI" id="CHEBI:597326"/>
    </ligand>
</feature>
<feature type="binding site" evidence="2">
    <location>
        <begin position="239"/>
        <end position="240"/>
    </location>
    <ligand>
        <name>pyridoxal 5'-phosphate</name>
        <dbReference type="ChEBI" id="CHEBI:597326"/>
    </ligand>
</feature>
<feature type="modified residue" description="N6-(pyridoxal phosphate)lysine" evidence="2">
    <location>
        <position position="198"/>
    </location>
</feature>
<accession>Q8FJB7</accession>
<reference key="1">
    <citation type="journal article" date="2002" name="Proc. Natl. Acad. Sci. U.S.A.">
        <title>Extensive mosaic structure revealed by the complete genome sequence of uropathogenic Escherichia coli.</title>
        <authorList>
            <person name="Welch R.A."/>
            <person name="Burland V."/>
            <person name="Plunkett G. III"/>
            <person name="Redford P."/>
            <person name="Roesch P."/>
            <person name="Rasko D."/>
            <person name="Buckles E.L."/>
            <person name="Liou S.-R."/>
            <person name="Boutin A."/>
            <person name="Hackett J."/>
            <person name="Stroud D."/>
            <person name="Mayhew G.F."/>
            <person name="Rose D.J."/>
            <person name="Zhou S."/>
            <person name="Schwartz D.C."/>
            <person name="Perna N.T."/>
            <person name="Mobley H.L.T."/>
            <person name="Donnenberg M.S."/>
            <person name="Blattner F.R."/>
        </authorList>
    </citation>
    <scope>NUCLEOTIDE SEQUENCE [LARGE SCALE GENOMIC DNA]</scope>
    <source>
        <strain>CFT073 / ATCC 700928 / UPEC</strain>
    </source>
</reference>
<keyword id="KW-0028">Amino-acid biosynthesis</keyword>
<keyword id="KW-0032">Aminotransferase</keyword>
<keyword id="KW-0963">Cytoplasm</keyword>
<keyword id="KW-0663">Pyridoxal phosphate</keyword>
<keyword id="KW-0664">Pyridoxine biosynthesis</keyword>
<keyword id="KW-1185">Reference proteome</keyword>
<keyword id="KW-0718">Serine biosynthesis</keyword>
<keyword id="KW-0808">Transferase</keyword>
<gene>
    <name evidence="2" type="primary">serC</name>
    <name type="ordered locus">c1045</name>
</gene>
<proteinExistence type="inferred from homology"/>
<name>SERC_ECOL6</name>